<gene>
    <name type="primary">ins-6</name>
    <name type="ORF">ZK84.6</name>
</gene>
<organism>
    <name type="scientific">Caenorhabditis elegans</name>
    <dbReference type="NCBI Taxonomy" id="6239"/>
    <lineage>
        <taxon>Eukaryota</taxon>
        <taxon>Metazoa</taxon>
        <taxon>Ecdysozoa</taxon>
        <taxon>Nematoda</taxon>
        <taxon>Chromadorea</taxon>
        <taxon>Rhabditida</taxon>
        <taxon>Rhabditina</taxon>
        <taxon>Rhabditomorpha</taxon>
        <taxon>Rhabditoidea</taxon>
        <taxon>Rhabditidae</taxon>
        <taxon>Peloderinae</taxon>
        <taxon>Caenorhabditis</taxon>
    </lineage>
</organism>
<comment type="function">
    <text evidence="3 4 5">Probable insulin-like peptide which negatively regulates synapse development at the neuromuscular junctions (PubMed:23665919). Probably acts as a daf-2/InsR agonist ligand to prevent dauer formation under optimal environmental conditions (PubMed:24671950). Acts on AWC sensory neurons to regulate high salt chemotaxis responses (PubMed:24013594).</text>
</comment>
<comment type="subcellular location">
    <subcellularLocation>
        <location evidence="6">Secreted</location>
    </subcellularLocation>
</comment>
<comment type="tissue specificity">
    <text evidence="5">Expressed by ASI and ASJ sensory neurons.</text>
</comment>
<comment type="PTM">
    <text evidence="7">May be processed by serine endoprotease bli-4.</text>
</comment>
<comment type="disruption phenotype">
    <text evidence="4">Severe reduction in Ca(2+) signal in AWC neuron and in chemotaxis in response to high salt concentrations.</text>
</comment>
<comment type="similarity">
    <text evidence="6">Belongs to the insulin family.</text>
</comment>
<sequence>MNSVFTIIFVLCALQVAASFRQSFGPSMSEESASMQLLRELQHNMMESAHRPMPRARRVPAPGETRACGRKLISLVMAVCGDLCNPQEGKDIATECCGNQCSDDYIRSACCP</sequence>
<name>ILB5_CAEEL</name>
<reference key="1">
    <citation type="journal article" date="1998" name="Science">
        <title>Genome sequence of the nematode C. elegans: a platform for investigating biology.</title>
        <authorList>
            <consortium name="The C. elegans sequencing consortium"/>
        </authorList>
    </citation>
    <scope>NUCLEOTIDE SEQUENCE [LARGE SCALE GENOMIC DNA]</scope>
    <source>
        <strain>Bristol N2</strain>
    </source>
</reference>
<reference key="2">
    <citation type="journal article" date="1998" name="Genome Res.">
        <title>New insulin-like proteins with atypical disulfide bond pattern characterized in Caenorhabditis elegans by comparative sequence analysis and homology modeling.</title>
        <authorList>
            <person name="Duret L."/>
            <person name="Guex N."/>
            <person name="Peitsch M.C."/>
            <person name="Bairoch A."/>
        </authorList>
    </citation>
    <scope>SEQUENCE REVISION</scope>
    <scope>SIMILARITY TO INSULIN</scope>
</reference>
<reference key="3">
    <citation type="journal article" date="2013" name="EMBO J.">
        <title>Attenuation of insulin signalling contributes to FSN-1-mediated regulation of synapse development.</title>
        <authorList>
            <person name="Hung W.L."/>
            <person name="Hwang C."/>
            <person name="Gao S."/>
            <person name="Liao E.H."/>
            <person name="Chitturi J."/>
            <person name="Wang Y."/>
            <person name="Li H."/>
            <person name="Stigloher C."/>
            <person name="Bessereau J.L."/>
            <person name="Zhen M."/>
        </authorList>
    </citation>
    <scope>FUNCTION</scope>
    <scope>PROTEOLYTIC CLEAVAGE</scope>
    <scope>MUTAGENESIS OF 57-ARG-ARG-58</scope>
</reference>
<reference key="4">
    <citation type="journal article" date="2013" name="Nat. Neurosci.">
        <title>Neuropeptide signaling remodels chemosensory circuit composition in Caenorhabditis elegans.</title>
        <authorList>
            <person name="Leinwand S.G."/>
            <person name="Chalasani S.H."/>
        </authorList>
    </citation>
    <scope>FUNCTION</scope>
    <scope>PROTEOLYTIC CLEAVAGE</scope>
    <scope>DISRUPTION PHENOTYPE</scope>
    <scope>MUTAGENESIS OF 57-ARG-ARG-58</scope>
</reference>
<reference key="5">
    <citation type="journal article" date="2014" name="Development">
        <title>A Caenorhabditis elegans developmental decision requires insulin signaling-mediated neuron-intestine communication.</title>
        <authorList>
            <person name="Hung W.L."/>
            <person name="Wang Y."/>
            <person name="Chitturi J."/>
            <person name="Zhen M."/>
        </authorList>
    </citation>
    <scope>FUNCTION</scope>
    <scope>TISSUE SPECIFICITY</scope>
</reference>
<reference key="6">
    <citation type="journal article" date="2003" name="Genes Dev.">
        <title>Insulin worms its way into the spotlight.</title>
        <authorList>
            <person name="Nelson D.W."/>
            <person name="Padgett R.W."/>
        </authorList>
    </citation>
    <scope>STRUCTURE BY NMR OF 63-112</scope>
    <scope>DISULFIDE BONDS</scope>
</reference>
<accession>P56174</accession>
<accession>Q23631</accession>
<proteinExistence type="evidence at protein level"/>
<dbReference type="EMBL" id="FO081688">
    <property type="protein sequence ID" value="CCD73329.1"/>
    <property type="molecule type" value="Genomic_DNA"/>
</dbReference>
<dbReference type="PIR" id="T29014">
    <property type="entry name" value="T29014"/>
</dbReference>
<dbReference type="RefSeq" id="NP_495198.1">
    <property type="nucleotide sequence ID" value="NM_062797.3"/>
</dbReference>
<dbReference type="PDB" id="2KJI">
    <property type="method" value="NMR"/>
    <property type="chains" value="A=63-112"/>
</dbReference>
<dbReference type="PDB" id="8TK9">
    <property type="method" value="X-ray"/>
    <property type="resolution" value="1.30 A"/>
    <property type="chains" value="B=59-112"/>
</dbReference>
<dbReference type="PDB" id="8TKT">
    <property type="method" value="X-ray"/>
    <property type="resolution" value="2.30 A"/>
    <property type="chains" value="B/D=59-112"/>
</dbReference>
<dbReference type="PDB" id="8TKU">
    <property type="method" value="X-ray"/>
    <property type="resolution" value="2.35 A"/>
    <property type="chains" value="B/D/F/H=59-112"/>
</dbReference>
<dbReference type="PDBsum" id="2KJI"/>
<dbReference type="PDBsum" id="8TK9"/>
<dbReference type="PDBsum" id="8TKT"/>
<dbReference type="PDBsum" id="8TKU"/>
<dbReference type="SMR" id="P56174"/>
<dbReference type="BioGRID" id="56186">
    <property type="interactions" value="1"/>
</dbReference>
<dbReference type="DIP" id="DIP-25033N"/>
<dbReference type="FunCoup" id="P56174">
    <property type="interactions" value="298"/>
</dbReference>
<dbReference type="STRING" id="6239.ZK84.6.1"/>
<dbReference type="PaxDb" id="6239-ZK84.6"/>
<dbReference type="EnsemblMetazoa" id="ZK84.6.1">
    <property type="protein sequence ID" value="ZK84.6.1"/>
    <property type="gene ID" value="WBGene00002089"/>
</dbReference>
<dbReference type="GeneID" id="191687"/>
<dbReference type="KEGG" id="cel:CELE_ZK84.6"/>
<dbReference type="UCSC" id="ZK84.6">
    <property type="organism name" value="c. elegans"/>
</dbReference>
<dbReference type="AGR" id="WB:WBGene00002089"/>
<dbReference type="CTD" id="191687"/>
<dbReference type="WormBase" id="ZK84.6">
    <property type="protein sequence ID" value="CE15253"/>
    <property type="gene ID" value="WBGene00002089"/>
    <property type="gene designation" value="ins-6"/>
</dbReference>
<dbReference type="eggNOG" id="ENOG502TIU4">
    <property type="taxonomic scope" value="Eukaryota"/>
</dbReference>
<dbReference type="GeneTree" id="ENSGT00970000196018"/>
<dbReference type="HOGENOM" id="CLU_154797_1_0_1"/>
<dbReference type="InParanoid" id="P56174"/>
<dbReference type="OMA" id="MESAHRP"/>
<dbReference type="OrthoDB" id="5824650at2759"/>
<dbReference type="PhylomeDB" id="P56174"/>
<dbReference type="SignaLink" id="P56174"/>
<dbReference type="EvolutionaryTrace" id="P56174"/>
<dbReference type="PRO" id="PR:P56174"/>
<dbReference type="Proteomes" id="UP000001940">
    <property type="component" value="Chromosome II"/>
</dbReference>
<dbReference type="Bgee" id="WBGene00002089">
    <property type="expression patterns" value="Expressed in larva and 3 other cell types or tissues"/>
</dbReference>
<dbReference type="GO" id="GO:0005615">
    <property type="term" value="C:extracellular space"/>
    <property type="evidence" value="ECO:0000250"/>
    <property type="project" value="WormBase"/>
</dbReference>
<dbReference type="GO" id="GO:0005179">
    <property type="term" value="F:hormone activity"/>
    <property type="evidence" value="ECO:0007669"/>
    <property type="project" value="UniProtKB-KW"/>
</dbReference>
<dbReference type="GO" id="GO:0005158">
    <property type="term" value="F:insulin receptor binding"/>
    <property type="evidence" value="ECO:0000314"/>
    <property type="project" value="WormBase"/>
</dbReference>
<dbReference type="GO" id="GO:1902075">
    <property type="term" value="P:cellular response to salt"/>
    <property type="evidence" value="ECO:0000315"/>
    <property type="project" value="UniProtKB"/>
</dbReference>
<dbReference type="GO" id="GO:0007635">
    <property type="term" value="P:chemosensory behavior"/>
    <property type="evidence" value="ECO:0000315"/>
    <property type="project" value="UniProtKB"/>
</dbReference>
<dbReference type="GO" id="GO:0040024">
    <property type="term" value="P:dauer larval development"/>
    <property type="evidence" value="ECO:0000316"/>
    <property type="project" value="UniProtKB"/>
</dbReference>
<dbReference type="GO" id="GO:0008286">
    <property type="term" value="P:insulin receptor signaling pathway"/>
    <property type="evidence" value="ECO:0000314"/>
    <property type="project" value="WormBase"/>
</dbReference>
<dbReference type="GO" id="GO:1905910">
    <property type="term" value="P:negative regulation of dauer entry"/>
    <property type="evidence" value="ECO:0000316"/>
    <property type="project" value="UniProtKB"/>
</dbReference>
<dbReference type="GO" id="GO:0008355">
    <property type="term" value="P:olfactory learning"/>
    <property type="evidence" value="ECO:0000315"/>
    <property type="project" value="WormBase"/>
</dbReference>
<dbReference type="GO" id="GO:0008582">
    <property type="term" value="P:regulation of synaptic assembly at neuromuscular junction"/>
    <property type="evidence" value="ECO:0000316"/>
    <property type="project" value="UniProtKB"/>
</dbReference>
<dbReference type="CDD" id="cd00101">
    <property type="entry name" value="IlGF_like"/>
    <property type="match status" value="1"/>
</dbReference>
<dbReference type="FunFam" id="1.10.100.10:FF:000006">
    <property type="entry name" value="Probable insulin-like peptide beta-type 4"/>
    <property type="match status" value="1"/>
</dbReference>
<dbReference type="Gene3D" id="1.10.100.10">
    <property type="entry name" value="Insulin-like"/>
    <property type="match status" value="1"/>
</dbReference>
<dbReference type="InterPro" id="IPR052335">
    <property type="entry name" value="Insulin-like_regulatory"/>
</dbReference>
<dbReference type="InterPro" id="IPR036438">
    <property type="entry name" value="Insulin-like_sf"/>
</dbReference>
<dbReference type="InterPro" id="IPR022353">
    <property type="entry name" value="Insulin_CS"/>
</dbReference>
<dbReference type="InterPro" id="IPR003235">
    <property type="entry name" value="Nem_insulin-like_b-type"/>
</dbReference>
<dbReference type="PANTHER" id="PTHR33893:SF9">
    <property type="entry name" value="INSULIN RELATED-RELATED"/>
    <property type="match status" value="1"/>
</dbReference>
<dbReference type="PANTHER" id="PTHR33893">
    <property type="entry name" value="INSULIN RELATED-RELATED-RELATED"/>
    <property type="match status" value="1"/>
</dbReference>
<dbReference type="Pfam" id="PF03488">
    <property type="entry name" value="Ins_beta"/>
    <property type="match status" value="1"/>
</dbReference>
<dbReference type="SUPFAM" id="SSF56994">
    <property type="entry name" value="Insulin-like"/>
    <property type="match status" value="1"/>
</dbReference>
<dbReference type="PROSITE" id="PS00262">
    <property type="entry name" value="INSULIN"/>
    <property type="match status" value="1"/>
</dbReference>
<protein>
    <recommendedName>
        <fullName>Probable insulin-like peptide beta-type 5</fullName>
    </recommendedName>
</protein>
<feature type="signal peptide" evidence="1">
    <location>
        <begin position="1"/>
        <end position="19"/>
    </location>
</feature>
<feature type="propeptide" id="PRO_0000016224" description="Removed; by convertase egl-3" evidence="3">
    <location>
        <begin position="20"/>
        <end position="58"/>
    </location>
</feature>
<feature type="chain" id="PRO_0000016225" description="Probable insulin-like peptide beta-type 5">
    <location>
        <begin position="59"/>
        <end position="112"/>
    </location>
</feature>
<feature type="disulfide bond" evidence="2">
    <location>
        <begin position="68"/>
        <end position="97"/>
    </location>
</feature>
<feature type="disulfide bond" evidence="2">
    <location>
        <begin position="80"/>
        <end position="110"/>
    </location>
</feature>
<feature type="disulfide bond" evidence="2">
    <location>
        <begin position="84"/>
        <end position="111"/>
    </location>
</feature>
<feature type="disulfide bond" evidence="2">
    <location>
        <begin position="96"/>
        <end position="101"/>
    </location>
</feature>
<feature type="mutagenesis site" description="Loss of processing by convertase egl-3." evidence="3">
    <original>RR</original>
    <variation>AA</variation>
    <location>
        <begin position="57"/>
        <end position="58"/>
    </location>
</feature>
<feature type="mutagenesis site" description="Probable loss of processing by protease bli-4. Severe reduction in Ca(2+) signal in AWC neuron and in chemotaxis in response to high salt concentrations." evidence="4">
    <original>RR</original>
    <variation>SS</variation>
    <location>
        <begin position="57"/>
        <end position="58"/>
    </location>
</feature>
<feature type="helix" evidence="8">
    <location>
        <begin position="62"/>
        <end position="80"/>
    </location>
</feature>
<feature type="helix" evidence="8">
    <location>
        <begin position="81"/>
        <end position="83"/>
    </location>
</feature>
<feature type="helix" evidence="8">
    <location>
        <begin position="86"/>
        <end position="98"/>
    </location>
</feature>
<feature type="helix" evidence="8">
    <location>
        <begin position="103"/>
        <end position="108"/>
    </location>
</feature>
<evidence type="ECO:0000255" key="1"/>
<evidence type="ECO:0000269" key="2">
    <source>
    </source>
</evidence>
<evidence type="ECO:0000269" key="3">
    <source>
    </source>
</evidence>
<evidence type="ECO:0000269" key="4">
    <source>
    </source>
</evidence>
<evidence type="ECO:0000269" key="5">
    <source>
    </source>
</evidence>
<evidence type="ECO:0000305" key="6"/>
<evidence type="ECO:0000305" key="7">
    <source>
    </source>
</evidence>
<evidence type="ECO:0007829" key="8">
    <source>
        <dbReference type="PDB" id="8TK9"/>
    </source>
</evidence>
<keyword id="KW-0002">3D-structure</keyword>
<keyword id="KW-0165">Cleavage on pair of basic residues</keyword>
<keyword id="KW-1015">Disulfide bond</keyword>
<keyword id="KW-0372">Hormone</keyword>
<keyword id="KW-1185">Reference proteome</keyword>
<keyword id="KW-0964">Secreted</keyword>
<keyword id="KW-0732">Signal</keyword>